<sequence length="389" mass="44629">MQQHSSKTAYVYSDKLLQYRFHDQHPFNQMRLKLTTELLLNANLLSPEQIVQPRIATDDELMLIHKYDYVEAIKHASHGIISEDEAKKYGLNDEENGQFKHMHRHSATIVGGALTLADLIMSGKVLNGCHLGGGLHHAQPGRASGFCIYNDIAITAQYLAKEYNQRVLIIDTDAHHGDGTQWSFYADNHVTTYSIHETGKFLFPGSGHYTERGEDIGYGHTVNVPLEPYTEDASFLECFKLTVEPVVKSFKPDIILSVNGVDIHYRDPLTHLNCTLHSLYEIPYFVKYLADSYTNGKVIMFGGGGYNIWRVVPRAWSHVFLSLIDQPIQSGYLPLEWINKWKHYSSELLPKRWEDRLNDYTYVPRTKEISEKNKKLALHIASWYESTRQ</sequence>
<dbReference type="EMBL" id="CP000046">
    <property type="protein sequence ID" value="AAW38313.1"/>
    <property type="molecule type" value="Genomic_DNA"/>
</dbReference>
<dbReference type="RefSeq" id="WP_001184005.1">
    <property type="nucleotide sequence ID" value="NZ_JBGOFO010000008.1"/>
</dbReference>
<dbReference type="SMR" id="Q5HF39"/>
<dbReference type="KEGG" id="sac:SACOL1785"/>
<dbReference type="HOGENOM" id="CLU_007727_8_0_9"/>
<dbReference type="UniPathway" id="UPA00040"/>
<dbReference type="Proteomes" id="UP000000530">
    <property type="component" value="Chromosome"/>
</dbReference>
<dbReference type="GO" id="GO:0004407">
    <property type="term" value="F:histone deacetylase activity"/>
    <property type="evidence" value="ECO:0007669"/>
    <property type="project" value="TreeGrafter"/>
</dbReference>
<dbReference type="GO" id="GO:0045150">
    <property type="term" value="P:acetoin catabolic process"/>
    <property type="evidence" value="ECO:0007669"/>
    <property type="project" value="UniProtKB-UniPathway"/>
</dbReference>
<dbReference type="GO" id="GO:0040029">
    <property type="term" value="P:epigenetic regulation of gene expression"/>
    <property type="evidence" value="ECO:0007669"/>
    <property type="project" value="TreeGrafter"/>
</dbReference>
<dbReference type="CDD" id="cd09994">
    <property type="entry name" value="HDAC_AcuC_like"/>
    <property type="match status" value="1"/>
</dbReference>
<dbReference type="Gene3D" id="3.40.800.20">
    <property type="entry name" value="Histone deacetylase domain"/>
    <property type="match status" value="1"/>
</dbReference>
<dbReference type="InterPro" id="IPR003085">
    <property type="entry name" value="AcuC"/>
</dbReference>
<dbReference type="InterPro" id="IPR050284">
    <property type="entry name" value="HDAC_PDAC"/>
</dbReference>
<dbReference type="InterPro" id="IPR000286">
    <property type="entry name" value="His_deacetylse"/>
</dbReference>
<dbReference type="InterPro" id="IPR023801">
    <property type="entry name" value="His_deacetylse_dom"/>
</dbReference>
<dbReference type="InterPro" id="IPR037138">
    <property type="entry name" value="His_deacetylse_dom_sf"/>
</dbReference>
<dbReference type="InterPro" id="IPR023696">
    <property type="entry name" value="Ureohydrolase_dom_sf"/>
</dbReference>
<dbReference type="PANTHER" id="PTHR10625:SF10">
    <property type="entry name" value="HISTONE DEACETYLASE HDAC1"/>
    <property type="match status" value="1"/>
</dbReference>
<dbReference type="PANTHER" id="PTHR10625">
    <property type="entry name" value="HISTONE DEACETYLASE HDAC1-RELATED"/>
    <property type="match status" value="1"/>
</dbReference>
<dbReference type="Pfam" id="PF00850">
    <property type="entry name" value="Hist_deacetyl"/>
    <property type="match status" value="1"/>
</dbReference>
<dbReference type="PRINTS" id="PR01272">
    <property type="entry name" value="ACUCPROTEIN"/>
</dbReference>
<dbReference type="PRINTS" id="PR01270">
    <property type="entry name" value="HDASUPER"/>
</dbReference>
<dbReference type="SUPFAM" id="SSF52768">
    <property type="entry name" value="Arginase/deacetylase"/>
    <property type="match status" value="1"/>
</dbReference>
<protein>
    <recommendedName>
        <fullName>Acetoin utilization protein AcuC</fullName>
    </recommendedName>
</protein>
<accession>Q5HF39</accession>
<feature type="chain" id="PRO_0000114730" description="Acetoin utilization protein AcuC">
    <location>
        <begin position="1"/>
        <end position="389"/>
    </location>
</feature>
<evidence type="ECO:0000250" key="1"/>
<evidence type="ECO:0000305" key="2"/>
<comment type="function">
    <text evidence="1">Role in growth on acetoin or butanediol. Involved in the breakdown of these compounds used as a carbon source (By similarity).</text>
</comment>
<comment type="pathway">
    <text>Ketone degradation; acetoin degradation.</text>
</comment>
<comment type="similarity">
    <text evidence="2">Belongs to the histone deacetylase family.</text>
</comment>
<proteinExistence type="inferred from homology"/>
<name>ACUC_STAAC</name>
<reference key="1">
    <citation type="journal article" date="2005" name="J. Bacteriol.">
        <title>Insights on evolution of virulence and resistance from the complete genome analysis of an early methicillin-resistant Staphylococcus aureus strain and a biofilm-producing methicillin-resistant Staphylococcus epidermidis strain.</title>
        <authorList>
            <person name="Gill S.R."/>
            <person name="Fouts D.E."/>
            <person name="Archer G.L."/>
            <person name="Mongodin E.F."/>
            <person name="DeBoy R.T."/>
            <person name="Ravel J."/>
            <person name="Paulsen I.T."/>
            <person name="Kolonay J.F."/>
            <person name="Brinkac L.M."/>
            <person name="Beanan M.J."/>
            <person name="Dodson R.J."/>
            <person name="Daugherty S.C."/>
            <person name="Madupu R."/>
            <person name="Angiuoli S.V."/>
            <person name="Durkin A.S."/>
            <person name="Haft D.H."/>
            <person name="Vamathevan J.J."/>
            <person name="Khouri H."/>
            <person name="Utterback T.R."/>
            <person name="Lee C."/>
            <person name="Dimitrov G."/>
            <person name="Jiang L."/>
            <person name="Qin H."/>
            <person name="Weidman J."/>
            <person name="Tran K."/>
            <person name="Kang K.H."/>
            <person name="Hance I.R."/>
            <person name="Nelson K.E."/>
            <person name="Fraser C.M."/>
        </authorList>
    </citation>
    <scope>NUCLEOTIDE SEQUENCE [LARGE SCALE GENOMIC DNA]</scope>
    <source>
        <strain>COL</strain>
    </source>
</reference>
<keyword id="KW-0006">Acetoin catabolism</keyword>
<gene>
    <name type="primary">acuC</name>
    <name type="ordered locus">SACOL1785</name>
</gene>
<organism>
    <name type="scientific">Staphylococcus aureus (strain COL)</name>
    <dbReference type="NCBI Taxonomy" id="93062"/>
    <lineage>
        <taxon>Bacteria</taxon>
        <taxon>Bacillati</taxon>
        <taxon>Bacillota</taxon>
        <taxon>Bacilli</taxon>
        <taxon>Bacillales</taxon>
        <taxon>Staphylococcaceae</taxon>
        <taxon>Staphylococcus</taxon>
    </lineage>
</organism>